<reference key="1">
    <citation type="journal article" date="2000" name="Nature">
        <title>Sequence and analysis of chromosome 3 of the plant Arabidopsis thaliana.</title>
        <authorList>
            <person name="Salanoubat M."/>
            <person name="Lemcke K."/>
            <person name="Rieger M."/>
            <person name="Ansorge W."/>
            <person name="Unseld M."/>
            <person name="Fartmann B."/>
            <person name="Valle G."/>
            <person name="Bloecker H."/>
            <person name="Perez-Alonso M."/>
            <person name="Obermaier B."/>
            <person name="Delseny M."/>
            <person name="Boutry M."/>
            <person name="Grivell L.A."/>
            <person name="Mache R."/>
            <person name="Puigdomenech P."/>
            <person name="De Simone V."/>
            <person name="Choisne N."/>
            <person name="Artiguenave F."/>
            <person name="Robert C."/>
            <person name="Brottier P."/>
            <person name="Wincker P."/>
            <person name="Cattolico L."/>
            <person name="Weissenbach J."/>
            <person name="Saurin W."/>
            <person name="Quetier F."/>
            <person name="Schaefer M."/>
            <person name="Mueller-Auer S."/>
            <person name="Gabel C."/>
            <person name="Fuchs M."/>
            <person name="Benes V."/>
            <person name="Wurmbach E."/>
            <person name="Drzonek H."/>
            <person name="Erfle H."/>
            <person name="Jordan N."/>
            <person name="Bangert S."/>
            <person name="Wiedelmann R."/>
            <person name="Kranz H."/>
            <person name="Voss H."/>
            <person name="Holland R."/>
            <person name="Brandt P."/>
            <person name="Nyakatura G."/>
            <person name="Vezzi A."/>
            <person name="D'Angelo M."/>
            <person name="Pallavicini A."/>
            <person name="Toppo S."/>
            <person name="Simionati B."/>
            <person name="Conrad A."/>
            <person name="Hornischer K."/>
            <person name="Kauer G."/>
            <person name="Loehnert T.-H."/>
            <person name="Nordsiek G."/>
            <person name="Reichelt J."/>
            <person name="Scharfe M."/>
            <person name="Schoen O."/>
            <person name="Bargues M."/>
            <person name="Terol J."/>
            <person name="Climent J."/>
            <person name="Navarro P."/>
            <person name="Collado C."/>
            <person name="Perez-Perez A."/>
            <person name="Ottenwaelder B."/>
            <person name="Duchemin D."/>
            <person name="Cooke R."/>
            <person name="Laudie M."/>
            <person name="Berger-Llauro C."/>
            <person name="Purnelle B."/>
            <person name="Masuy D."/>
            <person name="de Haan M."/>
            <person name="Maarse A.C."/>
            <person name="Alcaraz J.-P."/>
            <person name="Cottet A."/>
            <person name="Casacuberta E."/>
            <person name="Monfort A."/>
            <person name="Argiriou A."/>
            <person name="Flores M."/>
            <person name="Liguori R."/>
            <person name="Vitale D."/>
            <person name="Mannhaupt G."/>
            <person name="Haase D."/>
            <person name="Schoof H."/>
            <person name="Rudd S."/>
            <person name="Zaccaria P."/>
            <person name="Mewes H.-W."/>
            <person name="Mayer K.F.X."/>
            <person name="Kaul S."/>
            <person name="Town C.D."/>
            <person name="Koo H.L."/>
            <person name="Tallon L.J."/>
            <person name="Jenkins J."/>
            <person name="Rooney T."/>
            <person name="Rizzo M."/>
            <person name="Walts A."/>
            <person name="Utterback T."/>
            <person name="Fujii C.Y."/>
            <person name="Shea T.P."/>
            <person name="Creasy T.H."/>
            <person name="Haas B."/>
            <person name="Maiti R."/>
            <person name="Wu D."/>
            <person name="Peterson J."/>
            <person name="Van Aken S."/>
            <person name="Pai G."/>
            <person name="Militscher J."/>
            <person name="Sellers P."/>
            <person name="Gill J.E."/>
            <person name="Feldblyum T.V."/>
            <person name="Preuss D."/>
            <person name="Lin X."/>
            <person name="Nierman W.C."/>
            <person name="Salzberg S.L."/>
            <person name="White O."/>
            <person name="Venter J.C."/>
            <person name="Fraser C.M."/>
            <person name="Kaneko T."/>
            <person name="Nakamura Y."/>
            <person name="Sato S."/>
            <person name="Kato T."/>
            <person name="Asamizu E."/>
            <person name="Sasamoto S."/>
            <person name="Kimura T."/>
            <person name="Idesawa K."/>
            <person name="Kawashima K."/>
            <person name="Kishida Y."/>
            <person name="Kiyokawa C."/>
            <person name="Kohara M."/>
            <person name="Matsumoto M."/>
            <person name="Matsuno A."/>
            <person name="Muraki A."/>
            <person name="Nakayama S."/>
            <person name="Nakazaki N."/>
            <person name="Shinpo S."/>
            <person name="Takeuchi C."/>
            <person name="Wada T."/>
            <person name="Watanabe A."/>
            <person name="Yamada M."/>
            <person name="Yasuda M."/>
            <person name="Tabata S."/>
        </authorList>
    </citation>
    <scope>NUCLEOTIDE SEQUENCE [LARGE SCALE GENOMIC DNA]</scope>
    <source>
        <strain>cv. Columbia</strain>
    </source>
</reference>
<reference key="2">
    <citation type="journal article" date="2017" name="Plant J.">
        <title>Araport11: a complete reannotation of the Arabidopsis thaliana reference genome.</title>
        <authorList>
            <person name="Cheng C.Y."/>
            <person name="Krishnakumar V."/>
            <person name="Chan A.P."/>
            <person name="Thibaud-Nissen F."/>
            <person name="Schobel S."/>
            <person name="Town C.D."/>
        </authorList>
    </citation>
    <scope>GENOME REANNOTATION</scope>
    <source>
        <strain>cv. Columbia</strain>
    </source>
</reference>
<reference key="3">
    <citation type="journal article" date="2003" name="Science">
        <title>Empirical analysis of transcriptional activity in the Arabidopsis genome.</title>
        <authorList>
            <person name="Yamada K."/>
            <person name="Lim J."/>
            <person name="Dale J.M."/>
            <person name="Chen H."/>
            <person name="Shinn P."/>
            <person name="Palm C.J."/>
            <person name="Southwick A.M."/>
            <person name="Wu H.C."/>
            <person name="Kim C.J."/>
            <person name="Nguyen M."/>
            <person name="Pham P.K."/>
            <person name="Cheuk R.F."/>
            <person name="Karlin-Newmann G."/>
            <person name="Liu S.X."/>
            <person name="Lam B."/>
            <person name="Sakano H."/>
            <person name="Wu T."/>
            <person name="Yu G."/>
            <person name="Miranda M."/>
            <person name="Quach H.L."/>
            <person name="Tripp M."/>
            <person name="Chang C.H."/>
            <person name="Lee J.M."/>
            <person name="Toriumi M.J."/>
            <person name="Chan M.M."/>
            <person name="Tang C.C."/>
            <person name="Onodera C.S."/>
            <person name="Deng J.M."/>
            <person name="Akiyama K."/>
            <person name="Ansari Y."/>
            <person name="Arakawa T."/>
            <person name="Banh J."/>
            <person name="Banno F."/>
            <person name="Bowser L."/>
            <person name="Brooks S.Y."/>
            <person name="Carninci P."/>
            <person name="Chao Q."/>
            <person name="Choy N."/>
            <person name="Enju A."/>
            <person name="Goldsmith A.D."/>
            <person name="Gurjal M."/>
            <person name="Hansen N.F."/>
            <person name="Hayashizaki Y."/>
            <person name="Johnson-Hopson C."/>
            <person name="Hsuan V.W."/>
            <person name="Iida K."/>
            <person name="Karnes M."/>
            <person name="Khan S."/>
            <person name="Koesema E."/>
            <person name="Ishida J."/>
            <person name="Jiang P.X."/>
            <person name="Jones T."/>
            <person name="Kawai J."/>
            <person name="Kamiya A."/>
            <person name="Meyers C."/>
            <person name="Nakajima M."/>
            <person name="Narusaka M."/>
            <person name="Seki M."/>
            <person name="Sakurai T."/>
            <person name="Satou M."/>
            <person name="Tamse R."/>
            <person name="Vaysberg M."/>
            <person name="Wallender E.K."/>
            <person name="Wong C."/>
            <person name="Yamamura Y."/>
            <person name="Yuan S."/>
            <person name="Shinozaki K."/>
            <person name="Davis R.W."/>
            <person name="Theologis A."/>
            <person name="Ecker J.R."/>
        </authorList>
    </citation>
    <scope>NUCLEOTIDE SEQUENCE [LARGE SCALE MRNA]</scope>
    <source>
        <strain>cv. Columbia</strain>
    </source>
</reference>
<reference key="4">
    <citation type="journal article" date="2002" name="J. Biol. Chem.">
        <title>Transport of UDP-galactose in plants. Identification and functional characterization of AtUTr1, an Arabidopsis thaliana UDP-galactose/UDP-glucose transporter.</title>
        <authorList>
            <person name="Norambuena L."/>
            <person name="Marchant L."/>
            <person name="Berninsone P."/>
            <person name="Hirschberg C.B."/>
            <person name="Silva H."/>
            <person name="Orellana A."/>
        </authorList>
    </citation>
    <scope>GENE FAMILY</scope>
    <scope>NOMENCLATURE</scope>
</reference>
<reference key="5">
    <citation type="journal article" date="2005" name="Glycobiology">
        <title>Molecular cloning of two Arabidopsis UDP-galactose transporters by complementation of a deficient Chinese hamster ovary cell line.</title>
        <authorList>
            <person name="Bakker H."/>
            <person name="Routier F."/>
            <person name="Oelmann S."/>
            <person name="Jordi W."/>
            <person name="Lommen A."/>
            <person name="Gerardy-Schahn R."/>
            <person name="Bosch D."/>
        </authorList>
    </citation>
    <scope>GENE FAMILY</scope>
</reference>
<reference key="6">
    <citation type="journal article" date="2014" name="Proc. Natl. Acad. Sci. U.S.A.">
        <title>The Golgi localized bifunctional UDP-rhamnose/UDP-galactose transporter family of Arabidopsis.</title>
        <authorList>
            <person name="Rautengarten C."/>
            <person name="Ebert B."/>
            <person name="Moreno I."/>
            <person name="Temple H."/>
            <person name="Herter T."/>
            <person name="Link B."/>
            <person name="Donas-Cofre D."/>
            <person name="Moreno A."/>
            <person name="Saez-Aguayo S."/>
            <person name="Blanco F."/>
            <person name="Mortimer J.C."/>
            <person name="Schultink A."/>
            <person name="Reiter W.D."/>
            <person name="Dupree P."/>
            <person name="Pauly M."/>
            <person name="Heazlewood J.L."/>
            <person name="Scheller H.V."/>
            <person name="Orellana A."/>
        </authorList>
    </citation>
    <scope>GENE FAMILY</scope>
</reference>
<name>CSTR3_ARATH</name>
<proteinExistence type="evidence at transcript level"/>
<keyword id="KW-0333">Golgi apparatus</keyword>
<keyword id="KW-0472">Membrane</keyword>
<keyword id="KW-1185">Reference proteome</keyword>
<keyword id="KW-0762">Sugar transport</keyword>
<keyword id="KW-0812">Transmembrane</keyword>
<keyword id="KW-1133">Transmembrane helix</keyword>
<keyword id="KW-0813">Transport</keyword>
<protein>
    <recommendedName>
        <fullName>CMP-sialic acid transporter 3</fullName>
        <shortName>CMP-SA-Tr 3</shortName>
        <shortName>CMP-Sia-Tr 3</shortName>
    </recommendedName>
    <alternativeName>
        <fullName>UDP-galactose/UDP-glucose transporter 6</fullName>
        <shortName>AtUTr6</shortName>
    </alternativeName>
</protein>
<organism>
    <name type="scientific">Arabidopsis thaliana</name>
    <name type="common">Mouse-ear cress</name>
    <dbReference type="NCBI Taxonomy" id="3702"/>
    <lineage>
        <taxon>Eukaryota</taxon>
        <taxon>Viridiplantae</taxon>
        <taxon>Streptophyta</taxon>
        <taxon>Embryophyta</taxon>
        <taxon>Tracheophyta</taxon>
        <taxon>Spermatophyta</taxon>
        <taxon>Magnoliopsida</taxon>
        <taxon>eudicotyledons</taxon>
        <taxon>Gunneridae</taxon>
        <taxon>Pentapetalae</taxon>
        <taxon>rosids</taxon>
        <taxon>malvids</taxon>
        <taxon>Brassicales</taxon>
        <taxon>Brassicaceae</taxon>
        <taxon>Camelineae</taxon>
        <taxon>Arabidopsis</taxon>
    </lineage>
</organism>
<gene>
    <name type="primary">UTR6</name>
    <name type="ordered locus">At3g59360</name>
    <name type="ORF">F25L23.220</name>
</gene>
<comment type="function">
    <text evidence="1">Sugar transporter involved in the transport of CMP-sialic acid from the cytoplasm into the Golgi.</text>
</comment>
<comment type="subcellular location">
    <subcellularLocation>
        <location evidence="1">Golgi apparatus membrane</location>
        <topology evidence="1">Multi-pass membrane protein</topology>
    </subcellularLocation>
</comment>
<comment type="similarity">
    <text evidence="4">Belongs to the nucleotide-sugar transporter family. CMP-Sialate:CMP antiporter (TC 2.A.7.12) subfamily.</text>
</comment>
<comment type="sequence caution" evidence="4">
    <conflict type="erroneous gene model prediction">
        <sequence resource="EMBL-CDS" id="CAB91606"/>
    </conflict>
</comment>
<feature type="chain" id="PRO_0000416026" description="CMP-sialic acid transporter 3">
    <location>
        <begin position="1"/>
        <end position="405"/>
    </location>
</feature>
<feature type="topological domain" description="Cytoplasmic" evidence="2">
    <location>
        <begin position="1"/>
        <end position="39"/>
    </location>
</feature>
<feature type="transmembrane region" description="Helical" evidence="2">
    <location>
        <begin position="40"/>
        <end position="60"/>
    </location>
</feature>
<feature type="topological domain" description="Lumenal" evidence="2">
    <location>
        <begin position="61"/>
        <end position="73"/>
    </location>
</feature>
<feature type="transmembrane region" description="Helical" evidence="2">
    <location>
        <begin position="74"/>
        <end position="94"/>
    </location>
</feature>
<feature type="topological domain" description="Cytoplasmic" evidence="2">
    <location>
        <begin position="95"/>
        <end position="142"/>
    </location>
</feature>
<feature type="transmembrane region" description="Helical" evidence="2">
    <location>
        <begin position="143"/>
        <end position="163"/>
    </location>
</feature>
<feature type="topological domain" description="Lumenal" evidence="2">
    <location>
        <begin position="164"/>
        <end position="170"/>
    </location>
</feature>
<feature type="transmembrane region" description="Helical" evidence="2">
    <location>
        <begin position="171"/>
        <end position="191"/>
    </location>
</feature>
<feature type="topological domain" description="Cytoplasmic" evidence="2">
    <location>
        <begin position="192"/>
        <end position="199"/>
    </location>
</feature>
<feature type="transmembrane region" description="Helical" evidence="2">
    <location>
        <begin position="200"/>
        <end position="220"/>
    </location>
</feature>
<feature type="topological domain" description="Lumenal" evidence="2">
    <location>
        <begin position="221"/>
        <end position="243"/>
    </location>
</feature>
<feature type="transmembrane region" description="Helical" evidence="2">
    <location>
        <begin position="244"/>
        <end position="264"/>
    </location>
</feature>
<feature type="topological domain" description="Cytoplasmic" evidence="2">
    <location>
        <begin position="265"/>
        <end position="280"/>
    </location>
</feature>
<feature type="transmembrane region" description="Helical" evidence="2">
    <location>
        <begin position="281"/>
        <end position="301"/>
    </location>
</feature>
<feature type="topological domain" description="Lumenal" evidence="2">
    <location>
        <begin position="302"/>
        <end position="321"/>
    </location>
</feature>
<feature type="transmembrane region" description="Helical" evidence="2">
    <location>
        <begin position="322"/>
        <end position="342"/>
    </location>
</feature>
<feature type="topological domain" description="Cytoplasmic" evidence="2">
    <location>
        <begin position="343"/>
        <end position="405"/>
    </location>
</feature>
<feature type="region of interest" description="Disordered" evidence="3">
    <location>
        <begin position="385"/>
        <end position="405"/>
    </location>
</feature>
<feature type="compositionally biased region" description="Basic and acidic residues" evidence="3">
    <location>
        <begin position="389"/>
        <end position="405"/>
    </location>
</feature>
<dbReference type="EMBL" id="AL356014">
    <property type="protein sequence ID" value="CAB91606.1"/>
    <property type="status" value="ALT_SEQ"/>
    <property type="molecule type" value="Genomic_DNA"/>
</dbReference>
<dbReference type="EMBL" id="CP002686">
    <property type="protein sequence ID" value="AEE79911.1"/>
    <property type="molecule type" value="Genomic_DNA"/>
</dbReference>
<dbReference type="EMBL" id="CP002686">
    <property type="protein sequence ID" value="AEE79912.1"/>
    <property type="molecule type" value="Genomic_DNA"/>
</dbReference>
<dbReference type="EMBL" id="AF360241">
    <property type="protein sequence ID" value="AAK25951.1"/>
    <property type="molecule type" value="mRNA"/>
</dbReference>
<dbReference type="EMBL" id="AY040039">
    <property type="protein sequence ID" value="AAK64097.1"/>
    <property type="molecule type" value="mRNA"/>
</dbReference>
<dbReference type="PIR" id="T49004">
    <property type="entry name" value="T49004"/>
</dbReference>
<dbReference type="RefSeq" id="NP_567083.1">
    <property type="nucleotide sequence ID" value="NM_115798.3"/>
</dbReference>
<dbReference type="RefSeq" id="NP_850721.1">
    <property type="nucleotide sequence ID" value="NM_180390.3"/>
</dbReference>
<dbReference type="SMR" id="Q9C5H6"/>
<dbReference type="FunCoup" id="Q9C5H6">
    <property type="interactions" value="723"/>
</dbReference>
<dbReference type="STRING" id="3702.Q9C5H6"/>
<dbReference type="TCDB" id="2.A.7.12.3">
    <property type="family name" value="the drug/metabolite transporter (dmt) superfamily"/>
</dbReference>
<dbReference type="iPTMnet" id="Q9C5H6"/>
<dbReference type="PaxDb" id="3702-AT3G59360.2"/>
<dbReference type="ProteomicsDB" id="222719"/>
<dbReference type="EnsemblPlants" id="AT3G59360.1">
    <property type="protein sequence ID" value="AT3G59360.1"/>
    <property type="gene ID" value="AT3G59360"/>
</dbReference>
<dbReference type="EnsemblPlants" id="AT3G59360.2">
    <property type="protein sequence ID" value="AT3G59360.2"/>
    <property type="gene ID" value="AT3G59360"/>
</dbReference>
<dbReference type="GeneID" id="825105"/>
<dbReference type="Gramene" id="AT3G59360.1">
    <property type="protein sequence ID" value="AT3G59360.1"/>
    <property type="gene ID" value="AT3G59360"/>
</dbReference>
<dbReference type="Gramene" id="AT3G59360.2">
    <property type="protein sequence ID" value="AT3G59360.2"/>
    <property type="gene ID" value="AT3G59360"/>
</dbReference>
<dbReference type="KEGG" id="ath:AT3G59360"/>
<dbReference type="Araport" id="AT3G59360"/>
<dbReference type="TAIR" id="AT3G59360">
    <property type="gene designation" value="UTR6"/>
</dbReference>
<dbReference type="eggNOG" id="KOG2234">
    <property type="taxonomic scope" value="Eukaryota"/>
</dbReference>
<dbReference type="HOGENOM" id="CLU_035460_0_0_1"/>
<dbReference type="InParanoid" id="Q9C5H6"/>
<dbReference type="OMA" id="SCLKWAV"/>
<dbReference type="OrthoDB" id="419167at2759"/>
<dbReference type="PhylomeDB" id="Q9C5H6"/>
<dbReference type="PRO" id="PR:Q9C5H6"/>
<dbReference type="Proteomes" id="UP000006548">
    <property type="component" value="Chromosome 3"/>
</dbReference>
<dbReference type="ExpressionAtlas" id="Q9C5H6">
    <property type="expression patterns" value="baseline and differential"/>
</dbReference>
<dbReference type="GO" id="GO:0005794">
    <property type="term" value="C:Golgi apparatus"/>
    <property type="evidence" value="ECO:0007005"/>
    <property type="project" value="TAIR"/>
</dbReference>
<dbReference type="GO" id="GO:0000139">
    <property type="term" value="C:Golgi membrane"/>
    <property type="evidence" value="ECO:0007669"/>
    <property type="project" value="UniProtKB-SubCell"/>
</dbReference>
<dbReference type="GO" id="GO:0015165">
    <property type="term" value="F:pyrimidine nucleotide-sugar transmembrane transporter activity"/>
    <property type="evidence" value="ECO:0007669"/>
    <property type="project" value="InterPro"/>
</dbReference>
<dbReference type="GO" id="GO:0015136">
    <property type="term" value="F:sialic acid transmembrane transporter activity"/>
    <property type="evidence" value="ECO:0000250"/>
    <property type="project" value="UniProtKB"/>
</dbReference>
<dbReference type="GO" id="GO:0015739">
    <property type="term" value="P:sialic acid transport"/>
    <property type="evidence" value="ECO:0000250"/>
    <property type="project" value="UniProtKB"/>
</dbReference>
<dbReference type="InterPro" id="IPR007271">
    <property type="entry name" value="Nuc_sug_transpt"/>
</dbReference>
<dbReference type="PANTHER" id="PTHR10231">
    <property type="entry name" value="NUCLEOTIDE-SUGAR TRANSMEMBRANE TRANSPORTER"/>
    <property type="match status" value="1"/>
</dbReference>
<dbReference type="Pfam" id="PF04142">
    <property type="entry name" value="Nuc_sug_transp"/>
    <property type="match status" value="1"/>
</dbReference>
<dbReference type="PIRSF" id="PIRSF005799">
    <property type="entry name" value="UDP-gal_transpt"/>
    <property type="match status" value="1"/>
</dbReference>
<dbReference type="SUPFAM" id="SSF103481">
    <property type="entry name" value="Multidrug resistance efflux transporter EmrE"/>
    <property type="match status" value="1"/>
</dbReference>
<sequence>MKNGIAECPACHSKLVSPGSKTISRAYDDHKIRVSSKQRVLNVLLVVGDCMLVGLQPVLVYMSKVDGKFNFSPISVNFLTEIAKVIFAIVMLLIQARHQKVGEKPLLSVSTFVQAARNNVLLAVPALLYAINNYLKFTMQLYFNPATVKMLSNLKVLVIAVLLKMVMKRRFSIIQWEALALLLIGISVNQLRSLPEGATAIGIPLATGAYVCTVIFVTVPSMASVFNEYALKSQYDTSIYLQNLFLYGYGAIFNFLGILGTVIYKGPGSFDILQGHSRATMFLILNNAAQGILSSFFFKYADTILKKYSSTVATIFTGIASAALFGHVITMNFLLGISIVFISMHQFFSPLAKARDEQQQNGNLELGNTKDTHRANESFINMAAGANEEASHRGESDDRTPLLPR</sequence>
<accession>Q9C5H6</accession>
<accession>Q9LX35</accession>
<evidence type="ECO:0000250" key="1"/>
<evidence type="ECO:0000255" key="2"/>
<evidence type="ECO:0000256" key="3">
    <source>
        <dbReference type="SAM" id="MobiDB-lite"/>
    </source>
</evidence>
<evidence type="ECO:0000305" key="4"/>